<dbReference type="EC" id="6.3.2.1" evidence="1"/>
<dbReference type="EMBL" id="CP000930">
    <property type="protein sequence ID" value="ABZ83884.1"/>
    <property type="molecule type" value="Genomic_DNA"/>
</dbReference>
<dbReference type="RefSeq" id="WP_012282402.1">
    <property type="nucleotide sequence ID" value="NC_010337.2"/>
</dbReference>
<dbReference type="SMR" id="B0TBP5"/>
<dbReference type="STRING" id="498761.HM1_0668"/>
<dbReference type="KEGG" id="hmo:HM1_0668"/>
<dbReference type="eggNOG" id="COG0414">
    <property type="taxonomic scope" value="Bacteria"/>
</dbReference>
<dbReference type="HOGENOM" id="CLU_047148_0_0_9"/>
<dbReference type="OrthoDB" id="9773087at2"/>
<dbReference type="UniPathway" id="UPA00028">
    <property type="reaction ID" value="UER00005"/>
</dbReference>
<dbReference type="Proteomes" id="UP000008550">
    <property type="component" value="Chromosome"/>
</dbReference>
<dbReference type="GO" id="GO:0005829">
    <property type="term" value="C:cytosol"/>
    <property type="evidence" value="ECO:0007669"/>
    <property type="project" value="TreeGrafter"/>
</dbReference>
<dbReference type="GO" id="GO:0005524">
    <property type="term" value="F:ATP binding"/>
    <property type="evidence" value="ECO:0007669"/>
    <property type="project" value="UniProtKB-KW"/>
</dbReference>
<dbReference type="GO" id="GO:0004592">
    <property type="term" value="F:pantoate-beta-alanine ligase activity"/>
    <property type="evidence" value="ECO:0007669"/>
    <property type="project" value="UniProtKB-UniRule"/>
</dbReference>
<dbReference type="GO" id="GO:0015940">
    <property type="term" value="P:pantothenate biosynthetic process"/>
    <property type="evidence" value="ECO:0007669"/>
    <property type="project" value="UniProtKB-UniRule"/>
</dbReference>
<dbReference type="CDD" id="cd00560">
    <property type="entry name" value="PanC"/>
    <property type="match status" value="1"/>
</dbReference>
<dbReference type="FunFam" id="3.30.1300.10:FF:000001">
    <property type="entry name" value="Pantothenate synthetase"/>
    <property type="match status" value="1"/>
</dbReference>
<dbReference type="FunFam" id="3.40.50.620:FF:000013">
    <property type="entry name" value="Pantothenate synthetase"/>
    <property type="match status" value="1"/>
</dbReference>
<dbReference type="Gene3D" id="3.40.50.620">
    <property type="entry name" value="HUPs"/>
    <property type="match status" value="1"/>
</dbReference>
<dbReference type="Gene3D" id="3.30.1300.10">
    <property type="entry name" value="Pantoate-beta-alanine ligase, C-terminal domain"/>
    <property type="match status" value="1"/>
</dbReference>
<dbReference type="HAMAP" id="MF_00158">
    <property type="entry name" value="PanC"/>
    <property type="match status" value="1"/>
</dbReference>
<dbReference type="InterPro" id="IPR004821">
    <property type="entry name" value="Cyt_trans-like"/>
</dbReference>
<dbReference type="InterPro" id="IPR003721">
    <property type="entry name" value="Pantoate_ligase"/>
</dbReference>
<dbReference type="InterPro" id="IPR042176">
    <property type="entry name" value="Pantoate_ligase_C"/>
</dbReference>
<dbReference type="InterPro" id="IPR014729">
    <property type="entry name" value="Rossmann-like_a/b/a_fold"/>
</dbReference>
<dbReference type="NCBIfam" id="TIGR00125">
    <property type="entry name" value="cyt_tran_rel"/>
    <property type="match status" value="1"/>
</dbReference>
<dbReference type="NCBIfam" id="TIGR00018">
    <property type="entry name" value="panC"/>
    <property type="match status" value="1"/>
</dbReference>
<dbReference type="PANTHER" id="PTHR21299">
    <property type="entry name" value="CYTIDYLATE KINASE/PANTOATE-BETA-ALANINE LIGASE"/>
    <property type="match status" value="1"/>
</dbReference>
<dbReference type="PANTHER" id="PTHR21299:SF1">
    <property type="entry name" value="PANTOATE--BETA-ALANINE LIGASE"/>
    <property type="match status" value="1"/>
</dbReference>
<dbReference type="Pfam" id="PF02569">
    <property type="entry name" value="Pantoate_ligase"/>
    <property type="match status" value="1"/>
</dbReference>
<dbReference type="SUPFAM" id="SSF52374">
    <property type="entry name" value="Nucleotidylyl transferase"/>
    <property type="match status" value="1"/>
</dbReference>
<accession>B0TBP5</accession>
<proteinExistence type="inferred from homology"/>
<organism>
    <name type="scientific">Heliobacterium modesticaldum (strain ATCC 51547 / Ice1)</name>
    <dbReference type="NCBI Taxonomy" id="498761"/>
    <lineage>
        <taxon>Bacteria</taxon>
        <taxon>Bacillati</taxon>
        <taxon>Bacillota</taxon>
        <taxon>Clostridia</taxon>
        <taxon>Eubacteriales</taxon>
        <taxon>Heliobacteriaceae</taxon>
        <taxon>Heliomicrobium</taxon>
    </lineage>
</organism>
<gene>
    <name evidence="1" type="primary">panC</name>
    <name type="ordered locus">Helmi_12590</name>
    <name type="ORF">HM1_0668</name>
</gene>
<name>PANC_HELMI</name>
<evidence type="ECO:0000255" key="1">
    <source>
        <dbReference type="HAMAP-Rule" id="MF_00158"/>
    </source>
</evidence>
<protein>
    <recommendedName>
        <fullName evidence="1">Pantothenate synthetase</fullName>
        <shortName evidence="1">PS</shortName>
        <ecNumber evidence="1">6.3.2.1</ecNumber>
    </recommendedName>
    <alternativeName>
        <fullName evidence="1">Pantoate--beta-alanine ligase</fullName>
    </alternativeName>
    <alternativeName>
        <fullName evidence="1">Pantoate-activating enzyme</fullName>
    </alternativeName>
</protein>
<comment type="function">
    <text evidence="1">Catalyzes the condensation of pantoate with beta-alanine in an ATP-dependent reaction via a pantoyl-adenylate intermediate.</text>
</comment>
<comment type="catalytic activity">
    <reaction evidence="1">
        <text>(R)-pantoate + beta-alanine + ATP = (R)-pantothenate + AMP + diphosphate + H(+)</text>
        <dbReference type="Rhea" id="RHEA:10912"/>
        <dbReference type="ChEBI" id="CHEBI:15378"/>
        <dbReference type="ChEBI" id="CHEBI:15980"/>
        <dbReference type="ChEBI" id="CHEBI:29032"/>
        <dbReference type="ChEBI" id="CHEBI:30616"/>
        <dbReference type="ChEBI" id="CHEBI:33019"/>
        <dbReference type="ChEBI" id="CHEBI:57966"/>
        <dbReference type="ChEBI" id="CHEBI:456215"/>
        <dbReference type="EC" id="6.3.2.1"/>
    </reaction>
</comment>
<comment type="pathway">
    <text evidence="1">Cofactor biosynthesis; (R)-pantothenate biosynthesis; (R)-pantothenate from (R)-pantoate and beta-alanine: step 1/1.</text>
</comment>
<comment type="subunit">
    <text evidence="1">Homodimer.</text>
</comment>
<comment type="subcellular location">
    <subcellularLocation>
        <location evidence="1">Cytoplasm</location>
    </subcellularLocation>
</comment>
<comment type="miscellaneous">
    <text evidence="1">The reaction proceeds by a bi uni uni bi ping pong mechanism.</text>
</comment>
<comment type="similarity">
    <text evidence="1">Belongs to the pantothenate synthetase family.</text>
</comment>
<sequence>MRLIESIREMTAWSREQAREGRTIGFVPTMGYLHEGHLTLMRRAREACDRVVVSIFVNPLQFGAGEDFAEYPRDLIRDSRLAESAGVDVLFAPSAREMYPKGYHTFVDVERLTEGLCGASRPGHFRGVTTVVCKLFNIVRPDVAYFGQKDAQQLAVIRRMTEDLNLPVSVVGVPIVREADGLAMSSRNVYLSPQERQAALVLSRALARARELIEGGERDVARLRQIITETITAEPLAAIDYVSIVDNRFIQPVETLAGECLIALAVRIGKRRLIDNMVVEV</sequence>
<reference key="1">
    <citation type="journal article" date="2008" name="J. Bacteriol.">
        <title>The genome of Heliobacterium modesticaldum, a phototrophic representative of the Firmicutes containing the simplest photosynthetic apparatus.</title>
        <authorList>
            <person name="Sattley W.M."/>
            <person name="Madigan M.T."/>
            <person name="Swingley W.D."/>
            <person name="Cheung P.C."/>
            <person name="Clocksin K.M."/>
            <person name="Conrad A.L."/>
            <person name="Dejesa L.C."/>
            <person name="Honchak B.M."/>
            <person name="Jung D.O."/>
            <person name="Karbach L.E."/>
            <person name="Kurdoglu A."/>
            <person name="Lahiri S."/>
            <person name="Mastrian S.D."/>
            <person name="Page L.E."/>
            <person name="Taylor H.L."/>
            <person name="Wang Z.T."/>
            <person name="Raymond J."/>
            <person name="Chen M."/>
            <person name="Blankenship R.E."/>
            <person name="Touchman J.W."/>
        </authorList>
    </citation>
    <scope>NUCLEOTIDE SEQUENCE [LARGE SCALE GENOMIC DNA]</scope>
    <source>
        <strain>ATCC 51547 / Ice1</strain>
    </source>
</reference>
<feature type="chain" id="PRO_1000097071" description="Pantothenate synthetase">
    <location>
        <begin position="1"/>
        <end position="281"/>
    </location>
</feature>
<feature type="active site" description="Proton donor" evidence="1">
    <location>
        <position position="37"/>
    </location>
</feature>
<feature type="binding site" evidence="1">
    <location>
        <begin position="30"/>
        <end position="37"/>
    </location>
    <ligand>
        <name>ATP</name>
        <dbReference type="ChEBI" id="CHEBI:30616"/>
    </ligand>
</feature>
<feature type="binding site" evidence="1">
    <location>
        <position position="61"/>
    </location>
    <ligand>
        <name>(R)-pantoate</name>
        <dbReference type="ChEBI" id="CHEBI:15980"/>
    </ligand>
</feature>
<feature type="binding site" evidence="1">
    <location>
        <position position="61"/>
    </location>
    <ligand>
        <name>beta-alanine</name>
        <dbReference type="ChEBI" id="CHEBI:57966"/>
    </ligand>
</feature>
<feature type="binding site" evidence="1">
    <location>
        <begin position="147"/>
        <end position="150"/>
    </location>
    <ligand>
        <name>ATP</name>
        <dbReference type="ChEBI" id="CHEBI:30616"/>
    </ligand>
</feature>
<feature type="binding site" evidence="1">
    <location>
        <position position="153"/>
    </location>
    <ligand>
        <name>(R)-pantoate</name>
        <dbReference type="ChEBI" id="CHEBI:15980"/>
    </ligand>
</feature>
<feature type="binding site" evidence="1">
    <location>
        <position position="176"/>
    </location>
    <ligand>
        <name>ATP</name>
        <dbReference type="ChEBI" id="CHEBI:30616"/>
    </ligand>
</feature>
<feature type="binding site" evidence="1">
    <location>
        <begin position="184"/>
        <end position="187"/>
    </location>
    <ligand>
        <name>ATP</name>
        <dbReference type="ChEBI" id="CHEBI:30616"/>
    </ligand>
</feature>
<keyword id="KW-0067">ATP-binding</keyword>
<keyword id="KW-0963">Cytoplasm</keyword>
<keyword id="KW-0436">Ligase</keyword>
<keyword id="KW-0547">Nucleotide-binding</keyword>
<keyword id="KW-0566">Pantothenate biosynthesis</keyword>
<keyword id="KW-1185">Reference proteome</keyword>